<protein>
    <recommendedName>
        <fullName evidence="1">Nucleoside diphosphate kinase</fullName>
        <shortName evidence="1">NDK</shortName>
        <shortName evidence="1">NDP kinase</shortName>
        <ecNumber evidence="1">2.7.4.6</ecNumber>
    </recommendedName>
    <alternativeName>
        <fullName evidence="1">Nucleoside-2-P kinase</fullName>
    </alternativeName>
</protein>
<gene>
    <name evidence="1" type="primary">ndk</name>
    <name type="ordered locus">Tbd_0590</name>
</gene>
<evidence type="ECO:0000255" key="1">
    <source>
        <dbReference type="HAMAP-Rule" id="MF_00451"/>
    </source>
</evidence>
<keyword id="KW-0067">ATP-binding</keyword>
<keyword id="KW-0963">Cytoplasm</keyword>
<keyword id="KW-0418">Kinase</keyword>
<keyword id="KW-0460">Magnesium</keyword>
<keyword id="KW-0479">Metal-binding</keyword>
<keyword id="KW-0546">Nucleotide metabolism</keyword>
<keyword id="KW-0547">Nucleotide-binding</keyword>
<keyword id="KW-0597">Phosphoprotein</keyword>
<keyword id="KW-1185">Reference proteome</keyword>
<keyword id="KW-0808">Transferase</keyword>
<comment type="function">
    <text evidence="1">Major role in the synthesis of nucleoside triphosphates other than ATP. The ATP gamma phosphate is transferred to the NDP beta phosphate via a ping-pong mechanism, using a phosphorylated active-site intermediate.</text>
</comment>
<comment type="catalytic activity">
    <reaction evidence="1">
        <text>a 2'-deoxyribonucleoside 5'-diphosphate + ATP = a 2'-deoxyribonucleoside 5'-triphosphate + ADP</text>
        <dbReference type="Rhea" id="RHEA:44640"/>
        <dbReference type="ChEBI" id="CHEBI:30616"/>
        <dbReference type="ChEBI" id="CHEBI:61560"/>
        <dbReference type="ChEBI" id="CHEBI:73316"/>
        <dbReference type="ChEBI" id="CHEBI:456216"/>
        <dbReference type="EC" id="2.7.4.6"/>
    </reaction>
</comment>
<comment type="catalytic activity">
    <reaction evidence="1">
        <text>a ribonucleoside 5'-diphosphate + ATP = a ribonucleoside 5'-triphosphate + ADP</text>
        <dbReference type="Rhea" id="RHEA:18113"/>
        <dbReference type="ChEBI" id="CHEBI:30616"/>
        <dbReference type="ChEBI" id="CHEBI:57930"/>
        <dbReference type="ChEBI" id="CHEBI:61557"/>
        <dbReference type="ChEBI" id="CHEBI:456216"/>
        <dbReference type="EC" id="2.7.4.6"/>
    </reaction>
</comment>
<comment type="cofactor">
    <cofactor evidence="1">
        <name>Mg(2+)</name>
        <dbReference type="ChEBI" id="CHEBI:18420"/>
    </cofactor>
</comment>
<comment type="subunit">
    <text evidence="1">Homotetramer.</text>
</comment>
<comment type="subcellular location">
    <subcellularLocation>
        <location evidence="1">Cytoplasm</location>
    </subcellularLocation>
</comment>
<comment type="similarity">
    <text evidence="1">Belongs to the NDK family.</text>
</comment>
<name>NDK_THIDA</name>
<dbReference type="EC" id="2.7.4.6" evidence="1"/>
<dbReference type="EMBL" id="CP000116">
    <property type="protein sequence ID" value="AAZ96543.1"/>
    <property type="molecule type" value="Genomic_DNA"/>
</dbReference>
<dbReference type="RefSeq" id="WP_011311102.1">
    <property type="nucleotide sequence ID" value="NC_007404.1"/>
</dbReference>
<dbReference type="SMR" id="Q3SL74"/>
<dbReference type="STRING" id="292415.Tbd_0590"/>
<dbReference type="KEGG" id="tbd:Tbd_0590"/>
<dbReference type="eggNOG" id="COG0105">
    <property type="taxonomic scope" value="Bacteria"/>
</dbReference>
<dbReference type="HOGENOM" id="CLU_060216_8_1_4"/>
<dbReference type="OrthoDB" id="9801161at2"/>
<dbReference type="Proteomes" id="UP000008291">
    <property type="component" value="Chromosome"/>
</dbReference>
<dbReference type="GO" id="GO:0005737">
    <property type="term" value="C:cytoplasm"/>
    <property type="evidence" value="ECO:0007669"/>
    <property type="project" value="UniProtKB-SubCell"/>
</dbReference>
<dbReference type="GO" id="GO:0005524">
    <property type="term" value="F:ATP binding"/>
    <property type="evidence" value="ECO:0007669"/>
    <property type="project" value="UniProtKB-UniRule"/>
</dbReference>
<dbReference type="GO" id="GO:0046872">
    <property type="term" value="F:metal ion binding"/>
    <property type="evidence" value="ECO:0007669"/>
    <property type="project" value="UniProtKB-KW"/>
</dbReference>
<dbReference type="GO" id="GO:0004550">
    <property type="term" value="F:nucleoside diphosphate kinase activity"/>
    <property type="evidence" value="ECO:0007669"/>
    <property type="project" value="UniProtKB-UniRule"/>
</dbReference>
<dbReference type="GO" id="GO:0006241">
    <property type="term" value="P:CTP biosynthetic process"/>
    <property type="evidence" value="ECO:0007669"/>
    <property type="project" value="UniProtKB-UniRule"/>
</dbReference>
<dbReference type="GO" id="GO:0006183">
    <property type="term" value="P:GTP biosynthetic process"/>
    <property type="evidence" value="ECO:0007669"/>
    <property type="project" value="UniProtKB-UniRule"/>
</dbReference>
<dbReference type="GO" id="GO:0006228">
    <property type="term" value="P:UTP biosynthetic process"/>
    <property type="evidence" value="ECO:0007669"/>
    <property type="project" value="UniProtKB-UniRule"/>
</dbReference>
<dbReference type="CDD" id="cd04413">
    <property type="entry name" value="NDPk_I"/>
    <property type="match status" value="1"/>
</dbReference>
<dbReference type="FunFam" id="3.30.70.141:FF:000001">
    <property type="entry name" value="Nucleoside diphosphate kinase"/>
    <property type="match status" value="1"/>
</dbReference>
<dbReference type="Gene3D" id="3.30.70.141">
    <property type="entry name" value="Nucleoside diphosphate kinase-like domain"/>
    <property type="match status" value="1"/>
</dbReference>
<dbReference type="HAMAP" id="MF_00451">
    <property type="entry name" value="NDP_kinase"/>
    <property type="match status" value="1"/>
</dbReference>
<dbReference type="InterPro" id="IPR034907">
    <property type="entry name" value="NDK-like_dom"/>
</dbReference>
<dbReference type="InterPro" id="IPR036850">
    <property type="entry name" value="NDK-like_dom_sf"/>
</dbReference>
<dbReference type="InterPro" id="IPR001564">
    <property type="entry name" value="Nucleoside_diP_kinase"/>
</dbReference>
<dbReference type="InterPro" id="IPR023005">
    <property type="entry name" value="Nucleoside_diP_kinase_AS"/>
</dbReference>
<dbReference type="NCBIfam" id="NF001908">
    <property type="entry name" value="PRK00668.1"/>
    <property type="match status" value="1"/>
</dbReference>
<dbReference type="PANTHER" id="PTHR46161">
    <property type="entry name" value="NUCLEOSIDE DIPHOSPHATE KINASE"/>
    <property type="match status" value="1"/>
</dbReference>
<dbReference type="PANTHER" id="PTHR46161:SF3">
    <property type="entry name" value="NUCLEOSIDE DIPHOSPHATE KINASE DDB_G0292928-RELATED"/>
    <property type="match status" value="1"/>
</dbReference>
<dbReference type="Pfam" id="PF00334">
    <property type="entry name" value="NDK"/>
    <property type="match status" value="1"/>
</dbReference>
<dbReference type="PRINTS" id="PR01243">
    <property type="entry name" value="NUCDPKINASE"/>
</dbReference>
<dbReference type="SMART" id="SM00562">
    <property type="entry name" value="NDK"/>
    <property type="match status" value="1"/>
</dbReference>
<dbReference type="SUPFAM" id="SSF54919">
    <property type="entry name" value="Nucleoside diphosphate kinase, NDK"/>
    <property type="match status" value="1"/>
</dbReference>
<dbReference type="PROSITE" id="PS00469">
    <property type="entry name" value="NDPK"/>
    <property type="match status" value="1"/>
</dbReference>
<dbReference type="PROSITE" id="PS51374">
    <property type="entry name" value="NDPK_LIKE"/>
    <property type="match status" value="1"/>
</dbReference>
<proteinExistence type="inferred from homology"/>
<organism>
    <name type="scientific">Thiobacillus denitrificans (strain ATCC 25259 / T1)</name>
    <dbReference type="NCBI Taxonomy" id="292415"/>
    <lineage>
        <taxon>Bacteria</taxon>
        <taxon>Pseudomonadati</taxon>
        <taxon>Pseudomonadota</taxon>
        <taxon>Betaproteobacteria</taxon>
        <taxon>Nitrosomonadales</taxon>
        <taxon>Thiobacillaceae</taxon>
        <taxon>Thiobacillus</taxon>
    </lineage>
</organism>
<sequence length="142" mass="15429">MAVQRTFSIIKPDAVAKNVIGKIVSRFETNGLKVVASKMKHLSRQEAEGFYAVHKDRPFFKDLVDFMVSGPVVLQVLEGEDAIAKNRTLMGATDPKKAEPGTIRADFAESIDANAVHGSDAPETAAVEIAYFFPASEVYAGR</sequence>
<reference key="1">
    <citation type="journal article" date="2006" name="J. Bacteriol.">
        <title>The genome sequence of the obligately chemolithoautotrophic, facultatively anaerobic bacterium Thiobacillus denitrificans.</title>
        <authorList>
            <person name="Beller H.R."/>
            <person name="Chain P.S."/>
            <person name="Letain T.E."/>
            <person name="Chakicherla A."/>
            <person name="Larimer F.W."/>
            <person name="Richardson P.M."/>
            <person name="Coleman M.A."/>
            <person name="Wood A.P."/>
            <person name="Kelly D.P."/>
        </authorList>
    </citation>
    <scope>NUCLEOTIDE SEQUENCE [LARGE SCALE GENOMIC DNA]</scope>
    <source>
        <strain>ATCC 25259 / T1</strain>
    </source>
</reference>
<accession>Q3SL74</accession>
<feature type="chain" id="PRO_0000226585" description="Nucleoside diphosphate kinase">
    <location>
        <begin position="1"/>
        <end position="142"/>
    </location>
</feature>
<feature type="active site" description="Pros-phosphohistidine intermediate" evidence="1">
    <location>
        <position position="117"/>
    </location>
</feature>
<feature type="binding site" evidence="1">
    <location>
        <position position="11"/>
    </location>
    <ligand>
        <name>ATP</name>
        <dbReference type="ChEBI" id="CHEBI:30616"/>
    </ligand>
</feature>
<feature type="binding site" evidence="1">
    <location>
        <position position="59"/>
    </location>
    <ligand>
        <name>ATP</name>
        <dbReference type="ChEBI" id="CHEBI:30616"/>
    </ligand>
</feature>
<feature type="binding site" evidence="1">
    <location>
        <position position="87"/>
    </location>
    <ligand>
        <name>ATP</name>
        <dbReference type="ChEBI" id="CHEBI:30616"/>
    </ligand>
</feature>
<feature type="binding site" evidence="1">
    <location>
        <position position="93"/>
    </location>
    <ligand>
        <name>ATP</name>
        <dbReference type="ChEBI" id="CHEBI:30616"/>
    </ligand>
</feature>
<feature type="binding site" evidence="1">
    <location>
        <position position="104"/>
    </location>
    <ligand>
        <name>ATP</name>
        <dbReference type="ChEBI" id="CHEBI:30616"/>
    </ligand>
</feature>
<feature type="binding site" evidence="1">
    <location>
        <position position="114"/>
    </location>
    <ligand>
        <name>ATP</name>
        <dbReference type="ChEBI" id="CHEBI:30616"/>
    </ligand>
</feature>